<accession>Q1CLX4</accession>
<reference key="1">
    <citation type="journal article" date="2006" name="J. Bacteriol.">
        <title>Complete genome sequence of Yersinia pestis strains Antiqua and Nepal516: evidence of gene reduction in an emerging pathogen.</title>
        <authorList>
            <person name="Chain P.S.G."/>
            <person name="Hu P."/>
            <person name="Malfatti S.A."/>
            <person name="Radnedge L."/>
            <person name="Larimer F."/>
            <person name="Vergez L.M."/>
            <person name="Worsham P."/>
            <person name="Chu M.C."/>
            <person name="Andersen G.L."/>
        </authorList>
    </citation>
    <scope>NUCLEOTIDE SEQUENCE [LARGE SCALE GENOMIC DNA]</scope>
    <source>
        <strain>Nepal516</strain>
    </source>
</reference>
<sequence>MDYEFLRDLTGQVLVKFSMGHEVIGHWLNEEIKGDLVKLDHIETAADGVRGSERQWQLPGHEYTLWLDGEEVMVRANQLDLDGDEMEEGMNYYDEESLCLCGLEDFLLVLKGYRAFITQ</sequence>
<proteinExistence type="inferred from homology"/>
<comment type="similarity">
    <text evidence="1">Belongs to the UPF0231 family.</text>
</comment>
<evidence type="ECO:0000255" key="1">
    <source>
        <dbReference type="HAMAP-Rule" id="MF_01053"/>
    </source>
</evidence>
<name>Y674_YERPN</name>
<gene>
    <name type="ordered locus">YPN_0674</name>
</gene>
<protein>
    <recommendedName>
        <fullName evidence="1">UPF0231 protein YPN_0674</fullName>
    </recommendedName>
</protein>
<dbReference type="EMBL" id="CP000305">
    <property type="protein sequence ID" value="ABG17006.1"/>
    <property type="molecule type" value="Genomic_DNA"/>
</dbReference>
<dbReference type="SMR" id="Q1CLX4"/>
<dbReference type="KEGG" id="ypn:YPN_0674"/>
<dbReference type="HOGENOM" id="CLU_139226_0_0_6"/>
<dbReference type="Proteomes" id="UP000008936">
    <property type="component" value="Chromosome"/>
</dbReference>
<dbReference type="HAMAP" id="MF_01053">
    <property type="entry name" value="UPF0231"/>
    <property type="match status" value="1"/>
</dbReference>
<dbReference type="InterPro" id="IPR008249">
    <property type="entry name" value="UPF0231"/>
</dbReference>
<dbReference type="NCBIfam" id="NF003574">
    <property type="entry name" value="PRK05248.1-1"/>
    <property type="match status" value="1"/>
</dbReference>
<dbReference type="NCBIfam" id="NF003576">
    <property type="entry name" value="PRK05248.1-3"/>
    <property type="match status" value="1"/>
</dbReference>
<dbReference type="Pfam" id="PF06062">
    <property type="entry name" value="UPF0231"/>
    <property type="match status" value="1"/>
</dbReference>
<dbReference type="PIRSF" id="PIRSF006287">
    <property type="entry name" value="UCP006287"/>
    <property type="match status" value="1"/>
</dbReference>
<feature type="chain" id="PRO_1000064377" description="UPF0231 protein YPN_0674">
    <location>
        <begin position="1"/>
        <end position="119"/>
    </location>
</feature>
<organism>
    <name type="scientific">Yersinia pestis bv. Antiqua (strain Nepal516)</name>
    <dbReference type="NCBI Taxonomy" id="377628"/>
    <lineage>
        <taxon>Bacteria</taxon>
        <taxon>Pseudomonadati</taxon>
        <taxon>Pseudomonadota</taxon>
        <taxon>Gammaproteobacteria</taxon>
        <taxon>Enterobacterales</taxon>
        <taxon>Yersiniaceae</taxon>
        <taxon>Yersinia</taxon>
    </lineage>
</organism>